<name>UVE1_SCHPO</name>
<keyword id="KW-0227">DNA damage</keyword>
<keyword id="KW-0228">DNA excision</keyword>
<keyword id="KW-0234">DNA repair</keyword>
<keyword id="KW-0255">Endonuclease</keyword>
<keyword id="KW-0378">Hydrolase</keyword>
<keyword id="KW-0540">Nuclease</keyword>
<keyword id="KW-1185">Reference proteome</keyword>
<accession>Q10988</accession>
<accession>P87339</accession>
<dbReference type="EC" id="3.-.-.-"/>
<dbReference type="EMBL" id="D78571">
    <property type="protein sequence ID" value="BAA11415.1"/>
    <property type="molecule type" value="mRNA"/>
</dbReference>
<dbReference type="EMBL" id="U78487">
    <property type="protein sequence ID" value="AAC49664.1"/>
    <property type="molecule type" value="Genomic_DNA"/>
</dbReference>
<dbReference type="EMBL" id="CU329671">
    <property type="protein sequence ID" value="CAA19577.1"/>
    <property type="molecule type" value="Genomic_DNA"/>
</dbReference>
<dbReference type="PIR" id="S71134">
    <property type="entry name" value="S71134"/>
</dbReference>
<dbReference type="RefSeq" id="NP_596165.1">
    <property type="nucleotide sequence ID" value="NM_001022085.2"/>
</dbReference>
<dbReference type="SMR" id="Q10988"/>
<dbReference type="BioGRID" id="276874">
    <property type="interactions" value="26"/>
</dbReference>
<dbReference type="FunCoup" id="Q10988">
    <property type="interactions" value="545"/>
</dbReference>
<dbReference type="STRING" id="284812.Q10988"/>
<dbReference type="iPTMnet" id="Q10988"/>
<dbReference type="SwissPalm" id="Q10988"/>
<dbReference type="PaxDb" id="4896-SPBC19C7.09c.1"/>
<dbReference type="EnsemblFungi" id="SPBC19C7.09c.1">
    <property type="protein sequence ID" value="SPBC19C7.09c.1:pep"/>
    <property type="gene ID" value="SPBC19C7.09c"/>
</dbReference>
<dbReference type="GeneID" id="2540345"/>
<dbReference type="KEGG" id="spo:2540345"/>
<dbReference type="PomBase" id="SPBC19C7.09c">
    <property type="gene designation" value="uve1"/>
</dbReference>
<dbReference type="VEuPathDB" id="FungiDB:SPBC19C7.09c"/>
<dbReference type="eggNOG" id="ENOG502QTMI">
    <property type="taxonomic scope" value="Eukaryota"/>
</dbReference>
<dbReference type="HOGENOM" id="CLU_017168_3_0_1"/>
<dbReference type="InParanoid" id="Q10988"/>
<dbReference type="OMA" id="HFMRVSS"/>
<dbReference type="PhylomeDB" id="Q10988"/>
<dbReference type="PRO" id="PR:Q10988"/>
<dbReference type="Proteomes" id="UP000002485">
    <property type="component" value="Chromosome II"/>
</dbReference>
<dbReference type="GO" id="GO:0000262">
    <property type="term" value="C:mitochondrial chromosome"/>
    <property type="evidence" value="ECO:0000305"/>
    <property type="project" value="PomBase"/>
</dbReference>
<dbReference type="GO" id="GO:0005739">
    <property type="term" value="C:mitochondrion"/>
    <property type="evidence" value="ECO:0000314"/>
    <property type="project" value="PomBase"/>
</dbReference>
<dbReference type="GO" id="GO:0005634">
    <property type="term" value="C:nucleus"/>
    <property type="evidence" value="ECO:0000314"/>
    <property type="project" value="PomBase"/>
</dbReference>
<dbReference type="GO" id="GO:1990043">
    <property type="term" value="F:5' deoxyribonuclease (pyrimidine dimer) activity"/>
    <property type="evidence" value="ECO:0000314"/>
    <property type="project" value="PomBase"/>
</dbReference>
<dbReference type="GO" id="GO:0004519">
    <property type="term" value="F:endonuclease activity"/>
    <property type="evidence" value="ECO:0000314"/>
    <property type="project" value="PomBase"/>
</dbReference>
<dbReference type="GO" id="GO:0000404">
    <property type="term" value="F:heteroduplex DNA loop binding"/>
    <property type="evidence" value="ECO:0000314"/>
    <property type="project" value="PomBase"/>
</dbReference>
<dbReference type="GO" id="GO:0006284">
    <property type="term" value="P:base-excision repair"/>
    <property type="evidence" value="ECO:0000315"/>
    <property type="project" value="PomBase"/>
</dbReference>
<dbReference type="GO" id="GO:0006298">
    <property type="term" value="P:mismatch repair"/>
    <property type="evidence" value="ECO:0000315"/>
    <property type="project" value="PomBase"/>
</dbReference>
<dbReference type="GO" id="GO:0043504">
    <property type="term" value="P:mitochondrial DNA repair"/>
    <property type="evidence" value="ECO:0000315"/>
    <property type="project" value="PomBase"/>
</dbReference>
<dbReference type="GO" id="GO:0006289">
    <property type="term" value="P:nucleotide-excision repair"/>
    <property type="evidence" value="ECO:0007669"/>
    <property type="project" value="InterPro"/>
</dbReference>
<dbReference type="GO" id="GO:0006290">
    <property type="term" value="P:pyrimidine dimer repair"/>
    <property type="evidence" value="ECO:0000314"/>
    <property type="project" value="PomBase"/>
</dbReference>
<dbReference type="GO" id="GO:0070914">
    <property type="term" value="P:UV-damage excision repair"/>
    <property type="evidence" value="ECO:0000314"/>
    <property type="project" value="PomBase"/>
</dbReference>
<dbReference type="FunFam" id="3.20.20.150:FF:000012">
    <property type="entry name" value="Related to UV-endonuclease UVE-1"/>
    <property type="match status" value="1"/>
</dbReference>
<dbReference type="Gene3D" id="3.20.20.150">
    <property type="entry name" value="Divalent-metal-dependent TIM barrel enzymes"/>
    <property type="match status" value="1"/>
</dbReference>
<dbReference type="InterPro" id="IPR004601">
    <property type="entry name" value="UvdE"/>
</dbReference>
<dbReference type="InterPro" id="IPR036237">
    <property type="entry name" value="Xyl_isomerase-like_sf"/>
</dbReference>
<dbReference type="NCBIfam" id="TIGR00629">
    <property type="entry name" value="uvde"/>
    <property type="match status" value="1"/>
</dbReference>
<dbReference type="PANTHER" id="PTHR31290">
    <property type="entry name" value="UV-DAMAGE ENDONUCLEASE"/>
    <property type="match status" value="1"/>
</dbReference>
<dbReference type="PANTHER" id="PTHR31290:SF5">
    <property type="entry name" value="UV-DAMAGE ENDONUCLEASE"/>
    <property type="match status" value="1"/>
</dbReference>
<dbReference type="Pfam" id="PF03851">
    <property type="entry name" value="UvdE"/>
    <property type="match status" value="1"/>
</dbReference>
<dbReference type="SUPFAM" id="SSF51658">
    <property type="entry name" value="Xylose isomerase-like"/>
    <property type="match status" value="1"/>
</dbReference>
<gene>
    <name type="primary">uve1</name>
    <name type="synonym">uvde</name>
    <name type="ORF">SPBC19C7.09c</name>
</gene>
<reference key="1">
    <citation type="journal article" date="1996" name="Nucleic Acids Res.">
        <title>Characterization of a UV endonuclease gene from the fission yeast Schizosaccharomyces pombe and its bacterial homolog.</title>
        <authorList>
            <person name="Takao M."/>
            <person name="Yonemasu R."/>
            <person name="Yamamoto K."/>
            <person name="Yasui A."/>
        </authorList>
    </citation>
    <scope>NUCLEOTIDE SEQUENCE [MRNA]</scope>
    <scope>FUNCTION</scope>
    <source>
        <strain>972 / ATCC 24843</strain>
    </source>
</reference>
<reference key="2">
    <citation type="journal article" date="1997" name="Nucleic Acids Res.">
        <title>The fission yeast UVDR DNA repair pathway is inducible.</title>
        <authorList>
            <person name="Davey S."/>
            <person name="Nass M.L."/>
            <person name="Ferrer J.V."/>
            <person name="Sidik K."/>
            <person name="Eisenberger A."/>
            <person name="Mitchell D.L."/>
            <person name="Freyer G.A."/>
        </authorList>
    </citation>
    <scope>NUCLEOTIDE SEQUENCE [GENOMIC DNA]</scope>
    <scope>FUNCTION</scope>
    <scope>INDUCTION</scope>
</reference>
<reference key="3">
    <citation type="journal article" date="2002" name="Nature">
        <title>The genome sequence of Schizosaccharomyces pombe.</title>
        <authorList>
            <person name="Wood V."/>
            <person name="Gwilliam R."/>
            <person name="Rajandream M.A."/>
            <person name="Lyne M.H."/>
            <person name="Lyne R."/>
            <person name="Stewart A."/>
            <person name="Sgouros J.G."/>
            <person name="Peat N."/>
            <person name="Hayles J."/>
            <person name="Baker S.G."/>
            <person name="Basham D."/>
            <person name="Bowman S."/>
            <person name="Brooks K."/>
            <person name="Brown D."/>
            <person name="Brown S."/>
            <person name="Chillingworth T."/>
            <person name="Churcher C.M."/>
            <person name="Collins M."/>
            <person name="Connor R."/>
            <person name="Cronin A."/>
            <person name="Davis P."/>
            <person name="Feltwell T."/>
            <person name="Fraser A."/>
            <person name="Gentles S."/>
            <person name="Goble A."/>
            <person name="Hamlin N."/>
            <person name="Harris D.E."/>
            <person name="Hidalgo J."/>
            <person name="Hodgson G."/>
            <person name="Holroyd S."/>
            <person name="Hornsby T."/>
            <person name="Howarth S."/>
            <person name="Huckle E.J."/>
            <person name="Hunt S."/>
            <person name="Jagels K."/>
            <person name="James K.D."/>
            <person name="Jones L."/>
            <person name="Jones M."/>
            <person name="Leather S."/>
            <person name="McDonald S."/>
            <person name="McLean J."/>
            <person name="Mooney P."/>
            <person name="Moule S."/>
            <person name="Mungall K.L."/>
            <person name="Murphy L.D."/>
            <person name="Niblett D."/>
            <person name="Odell C."/>
            <person name="Oliver K."/>
            <person name="O'Neil S."/>
            <person name="Pearson D."/>
            <person name="Quail M.A."/>
            <person name="Rabbinowitsch E."/>
            <person name="Rutherford K.M."/>
            <person name="Rutter S."/>
            <person name="Saunders D."/>
            <person name="Seeger K."/>
            <person name="Sharp S."/>
            <person name="Skelton J."/>
            <person name="Simmonds M.N."/>
            <person name="Squares R."/>
            <person name="Squares S."/>
            <person name="Stevens K."/>
            <person name="Taylor K."/>
            <person name="Taylor R.G."/>
            <person name="Tivey A."/>
            <person name="Walsh S.V."/>
            <person name="Warren T."/>
            <person name="Whitehead S."/>
            <person name="Woodward J.R."/>
            <person name="Volckaert G."/>
            <person name="Aert R."/>
            <person name="Robben J."/>
            <person name="Grymonprez B."/>
            <person name="Weltjens I."/>
            <person name="Vanstreels E."/>
            <person name="Rieger M."/>
            <person name="Schaefer M."/>
            <person name="Mueller-Auer S."/>
            <person name="Gabel C."/>
            <person name="Fuchs M."/>
            <person name="Duesterhoeft A."/>
            <person name="Fritzc C."/>
            <person name="Holzer E."/>
            <person name="Moestl D."/>
            <person name="Hilbert H."/>
            <person name="Borzym K."/>
            <person name="Langer I."/>
            <person name="Beck A."/>
            <person name="Lehrach H."/>
            <person name="Reinhardt R."/>
            <person name="Pohl T.M."/>
            <person name="Eger P."/>
            <person name="Zimmermann W."/>
            <person name="Wedler H."/>
            <person name="Wambutt R."/>
            <person name="Purnelle B."/>
            <person name="Goffeau A."/>
            <person name="Cadieu E."/>
            <person name="Dreano S."/>
            <person name="Gloux S."/>
            <person name="Lelaure V."/>
            <person name="Mottier S."/>
            <person name="Galibert F."/>
            <person name="Aves S.J."/>
            <person name="Xiang Z."/>
            <person name="Hunt C."/>
            <person name="Moore K."/>
            <person name="Hurst S.M."/>
            <person name="Lucas M."/>
            <person name="Rochet M."/>
            <person name="Gaillardin C."/>
            <person name="Tallada V.A."/>
            <person name="Garzon A."/>
            <person name="Thode G."/>
            <person name="Daga R.R."/>
            <person name="Cruzado L."/>
            <person name="Jimenez J."/>
            <person name="Sanchez M."/>
            <person name="del Rey F."/>
            <person name="Benito J."/>
            <person name="Dominguez A."/>
            <person name="Revuelta J.L."/>
            <person name="Moreno S."/>
            <person name="Armstrong J."/>
            <person name="Forsburg S.L."/>
            <person name="Cerutti L."/>
            <person name="Lowe T."/>
            <person name="McCombie W.R."/>
            <person name="Paulsen I."/>
            <person name="Potashkin J."/>
            <person name="Shpakovski G.V."/>
            <person name="Ussery D."/>
            <person name="Barrell B.G."/>
            <person name="Nurse P."/>
        </authorList>
    </citation>
    <scope>NUCLEOTIDE SEQUENCE [LARGE SCALE GENOMIC DNA]</scope>
    <source>
        <strain>972 / ATCC 24843</strain>
    </source>
</reference>
<reference key="4">
    <citation type="journal article" date="2003" name="DNA Repair">
        <title>Fission yeast Uve1 and Apn2 function in distinct oxidative damage repair pathways in vivo.</title>
        <authorList>
            <person name="Fraser J.L.A."/>
            <person name="Neill E."/>
            <person name="Davey S."/>
        </authorList>
    </citation>
    <scope>FUNCTION</scope>
</reference>
<reference key="5">
    <citation type="journal article" date="2004" name="Nucleic Acids Res.">
        <title>The major role of human AP-endonuclease homolog Apn2 in repair of abasic sites in Schizosaccharomyces pombe.</title>
        <authorList>
            <person name="Ribar B."/>
            <person name="Izumi T."/>
            <person name="Mitra S."/>
        </authorList>
    </citation>
    <scope>FUNCTION</scope>
</reference>
<evidence type="ECO:0000256" key="1">
    <source>
        <dbReference type="SAM" id="MobiDB-lite"/>
    </source>
</evidence>
<evidence type="ECO:0000269" key="2">
    <source>
    </source>
</evidence>
<evidence type="ECO:0000269" key="3">
    <source>
    </source>
</evidence>
<evidence type="ECO:0000269" key="4">
    <source>
    </source>
</evidence>
<evidence type="ECO:0000269" key="5">
    <source>
    </source>
</evidence>
<evidence type="ECO:0000305" key="6"/>
<feature type="chain" id="PRO_0000215029" description="UV-damage endonuclease">
    <location>
        <begin position="1"/>
        <end position="599"/>
    </location>
</feature>
<feature type="region of interest" description="Disordered" evidence="1">
    <location>
        <begin position="89"/>
        <end position="224"/>
    </location>
</feature>
<feature type="region of interest" description="Disordered" evidence="1">
    <location>
        <begin position="561"/>
        <end position="599"/>
    </location>
</feature>
<feature type="compositionally biased region" description="Basic residues" evidence="1">
    <location>
        <begin position="97"/>
        <end position="115"/>
    </location>
</feature>
<feature type="compositionally biased region" description="Basic and acidic residues" evidence="1">
    <location>
        <begin position="116"/>
        <end position="127"/>
    </location>
</feature>
<feature type="compositionally biased region" description="Basic residues" evidence="1">
    <location>
        <begin position="137"/>
        <end position="146"/>
    </location>
</feature>
<comment type="function">
    <text evidence="2 3 4 5">Endonuclease for the repair of UV-irradiated DNA. Involved in the excision of cyclobutane pyrimidine dimers (CPD) and 6-4 pyrimidine pyrimidones (6-4PP) which forms the UV damage repair (UVDR) pathway. Also functions in oxidative damage repair in vivo. Provides back-up AP endonuclease activity to apn2 together with apn1.</text>
</comment>
<comment type="induction">
    <text evidence="5">By UV light.</text>
</comment>
<comment type="similarity">
    <text evidence="6">Belongs to the uve1/UvsE family.</text>
</comment>
<organism>
    <name type="scientific">Schizosaccharomyces pombe (strain 972 / ATCC 24843)</name>
    <name type="common">Fission yeast</name>
    <dbReference type="NCBI Taxonomy" id="284812"/>
    <lineage>
        <taxon>Eukaryota</taxon>
        <taxon>Fungi</taxon>
        <taxon>Dikarya</taxon>
        <taxon>Ascomycota</taxon>
        <taxon>Taphrinomycotina</taxon>
        <taxon>Schizosaccharomycetes</taxon>
        <taxon>Schizosaccharomycetales</taxon>
        <taxon>Schizosaccharomycetaceae</taxon>
        <taxon>Schizosaccharomyces</taxon>
    </lineage>
</organism>
<protein>
    <recommendedName>
        <fullName>UV-damage endonuclease</fullName>
        <shortName>UVDE</shortName>
        <ecNumber>3.-.-.-</ecNumber>
    </recommendedName>
</protein>
<sequence>MLRLLKRNIQISKRIVFTILKQKAFKGNHPCVPSVCTITYSRFHCLPDTLKSLLPMSSKTTLSMLPQVNIGANSFSAETPVDLKKENETELANISGPHKKSTSTSTRKRARSSKKKATDSVSDKIDESVASYDSSTHLRRSSRSKKPVNYNSSSESESEEQISKATKKVKQKEEEEYVEEVDEKSLKNESSSDEFEPVVPEQLETPISKRRRSRSSAKNLEKESTMNLDDHAPREMFDCLDKPIPWRGRLGYACLNTILRSMKERVFCSRTCRITTIQRDGLESVKQLGTQNVLDLIKLVEWNHNFGIHFMRVSSDLFPFASHAKYGYTLEFAQSHLEEVGKLANKYNHRLTMHPGQYTQIASPREVVVDSAIRDLAYHDEILSRMKLNEQLNKDAVLIIHLGGTFEGKKETLDRFRKNYQRLSDSVKARLVLENDDVSWSVQDLLPLCQELNIPLVLDWHHHNIVPGTLREGSLDLMPLIPTIRETWTRKGITQKQHYSESADPTAISGMKRRAHSDRVFDFPPCDPTMDLMIEAKEKEQAVFELCRRYELQNPPCPLEIMGPEYDQTRDGYYPPGAEKRLTARKRRSRKEEVEEDEK</sequence>
<proteinExistence type="evidence at transcript level"/>